<gene>
    <name type="primary">sbcD</name>
    <name type="ordered locus">SAOUHSC_01341</name>
</gene>
<protein>
    <recommendedName>
        <fullName>Nuclease SbcCD subunit D</fullName>
    </recommendedName>
</protein>
<proteinExistence type="evidence at protein level"/>
<dbReference type="EMBL" id="CP000253">
    <property type="protein sequence ID" value="ABD30438.1"/>
    <property type="molecule type" value="Genomic_DNA"/>
</dbReference>
<dbReference type="RefSeq" id="WP_000691284.1">
    <property type="nucleotide sequence ID" value="NZ_LS483365.1"/>
</dbReference>
<dbReference type="RefSeq" id="YP_499870.1">
    <property type="nucleotide sequence ID" value="NC_007795.1"/>
</dbReference>
<dbReference type="SMR" id="Q2FYT4"/>
<dbReference type="STRING" id="93061.SAOUHSC_01341"/>
<dbReference type="PaxDb" id="1280-SAXN108_1362"/>
<dbReference type="GeneID" id="3920205"/>
<dbReference type="KEGG" id="sao:SAOUHSC_01341"/>
<dbReference type="PATRIC" id="fig|93061.5.peg.1224"/>
<dbReference type="eggNOG" id="COG0420">
    <property type="taxonomic scope" value="Bacteria"/>
</dbReference>
<dbReference type="HOGENOM" id="CLU_038045_0_1_9"/>
<dbReference type="OrthoDB" id="9773856at2"/>
<dbReference type="PRO" id="PR:Q2FYT4"/>
<dbReference type="Proteomes" id="UP000008816">
    <property type="component" value="Chromosome"/>
</dbReference>
<dbReference type="GO" id="GO:0008408">
    <property type="term" value="F:3'-5' exonuclease activity"/>
    <property type="evidence" value="ECO:0007669"/>
    <property type="project" value="InterPro"/>
</dbReference>
<dbReference type="GO" id="GO:0003677">
    <property type="term" value="F:DNA binding"/>
    <property type="evidence" value="ECO:0000318"/>
    <property type="project" value="GO_Central"/>
</dbReference>
<dbReference type="GO" id="GO:0004529">
    <property type="term" value="F:DNA exonuclease activity"/>
    <property type="evidence" value="ECO:0000318"/>
    <property type="project" value="GO_Central"/>
</dbReference>
<dbReference type="GO" id="GO:0004519">
    <property type="term" value="F:endonuclease activity"/>
    <property type="evidence" value="ECO:0007669"/>
    <property type="project" value="UniProtKB-KW"/>
</dbReference>
<dbReference type="GO" id="GO:0006310">
    <property type="term" value="P:DNA recombination"/>
    <property type="evidence" value="ECO:0007669"/>
    <property type="project" value="UniProtKB-KW"/>
</dbReference>
<dbReference type="GO" id="GO:0006281">
    <property type="term" value="P:DNA repair"/>
    <property type="evidence" value="ECO:0000318"/>
    <property type="project" value="GO_Central"/>
</dbReference>
<dbReference type="GO" id="GO:0006260">
    <property type="term" value="P:DNA replication"/>
    <property type="evidence" value="ECO:0007669"/>
    <property type="project" value="UniProtKB-KW"/>
</dbReference>
<dbReference type="GO" id="GO:0009432">
    <property type="term" value="P:SOS response"/>
    <property type="evidence" value="ECO:0007669"/>
    <property type="project" value="UniProtKB-KW"/>
</dbReference>
<dbReference type="CDD" id="cd00840">
    <property type="entry name" value="MPP_Mre11_N"/>
    <property type="match status" value="1"/>
</dbReference>
<dbReference type="Gene3D" id="3.60.21.10">
    <property type="match status" value="1"/>
</dbReference>
<dbReference type="InterPro" id="IPR004843">
    <property type="entry name" value="Calcineurin-like_PHP_ApaH"/>
</dbReference>
<dbReference type="InterPro" id="IPR050535">
    <property type="entry name" value="DNA_Repair-Maintenance_Comp"/>
</dbReference>
<dbReference type="InterPro" id="IPR029052">
    <property type="entry name" value="Metallo-depent_PP-like"/>
</dbReference>
<dbReference type="InterPro" id="IPR041796">
    <property type="entry name" value="Mre11_N"/>
</dbReference>
<dbReference type="InterPro" id="IPR053381">
    <property type="entry name" value="SbcCD_nuclease"/>
</dbReference>
<dbReference type="InterPro" id="IPR004593">
    <property type="entry name" value="SbcD"/>
</dbReference>
<dbReference type="InterPro" id="IPR026843">
    <property type="entry name" value="SbcD_C"/>
</dbReference>
<dbReference type="NCBIfam" id="TIGR00619">
    <property type="entry name" value="sbcd"/>
    <property type="match status" value="1"/>
</dbReference>
<dbReference type="NCBIfam" id="NF041753">
    <property type="entry name" value="sbcd_Staph"/>
    <property type="match status" value="1"/>
</dbReference>
<dbReference type="PANTHER" id="PTHR30337">
    <property type="entry name" value="COMPONENT OF ATP-DEPENDENT DSDNA EXONUCLEASE"/>
    <property type="match status" value="1"/>
</dbReference>
<dbReference type="PANTHER" id="PTHR30337:SF0">
    <property type="entry name" value="NUCLEASE SBCCD SUBUNIT D"/>
    <property type="match status" value="1"/>
</dbReference>
<dbReference type="Pfam" id="PF00149">
    <property type="entry name" value="Metallophos"/>
    <property type="match status" value="1"/>
</dbReference>
<dbReference type="Pfam" id="PF12320">
    <property type="entry name" value="SbcD_C"/>
    <property type="match status" value="1"/>
</dbReference>
<dbReference type="SUPFAM" id="SSF56300">
    <property type="entry name" value="Metallo-dependent phosphatases"/>
    <property type="match status" value="1"/>
</dbReference>
<accession>Q2FYT4</accession>
<comment type="function">
    <text evidence="1 2">SbcCD cleaves DNA hairpin structures. These structures can inhibit DNA replication and are intermediates in certain DNA recombination reactions. The complex acts as a 3'-&gt;5' double strand exonuclease that can open hairpins. It also has a 5' single-strand endonuclease activity (By similarity). Is probably part of the SOS regulon and involved in DNA recombination and repair.</text>
</comment>
<comment type="subunit">
    <text evidence="1">Heterodimer of SbcC and SbcD.</text>
</comment>
<comment type="induction">
    <text evidence="2">Induced by ciprofloxacin and up-regulated by LexA.</text>
</comment>
<comment type="similarity">
    <text evidence="3">Belongs to the SbcD family.</text>
</comment>
<evidence type="ECO:0000250" key="1"/>
<evidence type="ECO:0000269" key="2">
    <source>
    </source>
</evidence>
<evidence type="ECO:0000305" key="3"/>
<keyword id="KW-0227">DNA damage</keyword>
<keyword id="KW-0233">DNA recombination</keyword>
<keyword id="KW-0234">DNA repair</keyword>
<keyword id="KW-0235">DNA replication</keyword>
<keyword id="KW-0255">Endonuclease</keyword>
<keyword id="KW-0269">Exonuclease</keyword>
<keyword id="KW-0378">Hydrolase</keyword>
<keyword id="KW-0540">Nuclease</keyword>
<keyword id="KW-1185">Reference proteome</keyword>
<keyword id="KW-0742">SOS response</keyword>
<reference key="1">
    <citation type="book" date="2006" name="Gram positive pathogens, 2nd edition">
        <title>The Staphylococcus aureus NCTC 8325 genome.</title>
        <editorList>
            <person name="Fischetti V."/>
            <person name="Novick R."/>
            <person name="Ferretti J."/>
            <person name="Portnoy D."/>
            <person name="Rood J."/>
        </editorList>
        <authorList>
            <person name="Gillaspy A.F."/>
            <person name="Worrell V."/>
            <person name="Orvis J."/>
            <person name="Roe B.A."/>
            <person name="Dyer D.W."/>
            <person name="Iandolo J.J."/>
        </authorList>
    </citation>
    <scope>NUCLEOTIDE SEQUENCE [LARGE SCALE GENOMIC DNA]</scope>
    <source>
        <strain>NCTC 8325 / PS 47</strain>
    </source>
</reference>
<reference key="2">
    <citation type="journal article" date="2007" name="J. Bacteriol.">
        <title>Complete and SOS-mediated response of Staphylococcus aureus to the antibiotic ciprofloxacin.</title>
        <authorList>
            <person name="Cirz R.T."/>
            <person name="Jones M.B."/>
            <person name="Gingles N.A."/>
            <person name="Minogue T.D."/>
            <person name="Jarrahi B."/>
            <person name="Peterson S.N."/>
            <person name="Romesberg F.E."/>
        </authorList>
    </citation>
    <scope>FUNCTION IN SOS RESPONSE</scope>
    <scope>INDUCTION BY CIPROFLOXACIN AND LEXA</scope>
</reference>
<organism>
    <name type="scientific">Staphylococcus aureus (strain NCTC 8325 / PS 47)</name>
    <dbReference type="NCBI Taxonomy" id="93061"/>
    <lineage>
        <taxon>Bacteria</taxon>
        <taxon>Bacillati</taxon>
        <taxon>Bacillota</taxon>
        <taxon>Bacilli</taxon>
        <taxon>Bacillales</taxon>
        <taxon>Staphylococcaceae</taxon>
        <taxon>Staphylococcus</taxon>
    </lineage>
</organism>
<feature type="chain" id="PRO_0000338488" description="Nuclease SbcCD subunit D">
    <location>
        <begin position="1"/>
        <end position="373"/>
    </location>
</feature>
<name>SBCD_STAA8</name>
<sequence>MKIIHTADWHLGKILNGKQLLEDQAYILDMFVEKMKEEEPDIIVIAGDLYDTTYPSKDAIMLLEQAIGKLNLELRIPIIIISGNHDGKERLNYGASWFEHNQLFIRTDFTSINSPIEINGVNFYTLPYATVSEMKHYFEDDTIETHQQGITRCIETIAPEIDEDAVNILISHLTVQGGKTSDSERPLTIGTVESVQKGVFDIFDYVMLGHLHHPFSIEDDKIKYSGSLLQYSFSEAGQAKGYRRVTINDGIINDVFIPLKPLRQLEIISGEYNDVINEKVHVKNKDNYLHFKLKNMSHITDPMMSLKQIYPNTLALTNETFNYNEENNAIEISEKDDMSIIEMFYKHITDKELSDIQSKKIKNILENELRKED</sequence>